<dbReference type="EMBL" id="AF220420">
    <property type="protein sequence ID" value="AAG36787.1"/>
    <property type="molecule type" value="mRNA"/>
</dbReference>
<dbReference type="EMBL" id="AF220421">
    <property type="protein sequence ID" value="AAG36788.1"/>
    <property type="molecule type" value="mRNA"/>
</dbReference>
<dbReference type="EMBL" id="AF220422">
    <property type="protein sequence ID" value="AAG36789.1"/>
    <property type="molecule type" value="mRNA"/>
</dbReference>
<dbReference type="EMBL" id="AF220423">
    <property type="protein sequence ID" value="AAG36790.1"/>
    <property type="molecule type" value="mRNA"/>
</dbReference>
<dbReference type="EMBL" id="AE014297">
    <property type="protein sequence ID" value="AAF54377.3"/>
    <property type="molecule type" value="Genomic_DNA"/>
</dbReference>
<dbReference type="EMBL" id="AE014297">
    <property type="protein sequence ID" value="AAF54378.2"/>
    <property type="molecule type" value="Genomic_DNA"/>
</dbReference>
<dbReference type="EMBL" id="AE014297">
    <property type="protein sequence ID" value="AAN13424.2"/>
    <property type="molecule type" value="Genomic_DNA"/>
</dbReference>
<dbReference type="EMBL" id="AE014297">
    <property type="protein sequence ID" value="AAN13425.2"/>
    <property type="molecule type" value="Genomic_DNA"/>
</dbReference>
<dbReference type="EMBL" id="AE014297">
    <property type="protein sequence ID" value="AAN13427.1"/>
    <property type="molecule type" value="Genomic_DNA"/>
</dbReference>
<dbReference type="EMBL" id="AE014297">
    <property type="protein sequence ID" value="AAN13428.1"/>
    <property type="molecule type" value="Genomic_DNA"/>
</dbReference>
<dbReference type="EMBL" id="AE014297">
    <property type="protein sequence ID" value="ABI31151.1"/>
    <property type="molecule type" value="Genomic_DNA"/>
</dbReference>
<dbReference type="EMBL" id="AE014297">
    <property type="protein sequence ID" value="ABI31152.1"/>
    <property type="molecule type" value="Genomic_DNA"/>
</dbReference>
<dbReference type="EMBL" id="AE014297">
    <property type="protein sequence ID" value="ABI31154.1"/>
    <property type="molecule type" value="Genomic_DNA"/>
</dbReference>
<dbReference type="EMBL" id="AE014297">
    <property type="protein sequence ID" value="ADV37290.1"/>
    <property type="molecule type" value="Genomic_DNA"/>
</dbReference>
<dbReference type="EMBL" id="AE014297">
    <property type="protein sequence ID" value="ADV37291.1"/>
    <property type="molecule type" value="Genomic_DNA"/>
</dbReference>
<dbReference type="EMBL" id="AE014297">
    <property type="protein sequence ID" value="ADV37292.1"/>
    <property type="molecule type" value="Genomic_DNA"/>
</dbReference>
<dbReference type="EMBL" id="AE014297">
    <property type="protein sequence ID" value="ADV37293.1"/>
    <property type="molecule type" value="Genomic_DNA"/>
</dbReference>
<dbReference type="EMBL" id="AE014297">
    <property type="protein sequence ID" value="ADV37294.1"/>
    <property type="molecule type" value="Genomic_DNA"/>
</dbReference>
<dbReference type="EMBL" id="AE014297">
    <property type="protein sequence ID" value="AGB95796.1"/>
    <property type="molecule type" value="Genomic_DNA"/>
</dbReference>
<dbReference type="EMBL" id="AE014297">
    <property type="protein sequence ID" value="AGB95797.1"/>
    <property type="molecule type" value="Genomic_DNA"/>
</dbReference>
<dbReference type="EMBL" id="AE014297">
    <property type="protein sequence ID" value="AHN57251.1"/>
    <property type="molecule type" value="Genomic_DNA"/>
</dbReference>
<dbReference type="EMBL" id="AE014297">
    <property type="protein sequence ID" value="AHN57252.1"/>
    <property type="molecule type" value="Genomic_DNA"/>
</dbReference>
<dbReference type="EMBL" id="AY089247">
    <property type="protein sequence ID" value="AAL89985.1"/>
    <property type="molecule type" value="mRNA"/>
</dbReference>
<dbReference type="RefSeq" id="NP_001036691.1">
    <molecule id="A0A0B4KGY6-5"/>
    <property type="nucleotide sequence ID" value="NM_001043226.1"/>
</dbReference>
<dbReference type="RefSeq" id="NP_001036692.1">
    <molecule id="A0A0B4KGY6-3"/>
    <property type="nucleotide sequence ID" value="NM_001043227.2"/>
</dbReference>
<dbReference type="RefSeq" id="NP_001036695.1">
    <molecule id="A0A0B4KGY6-7"/>
    <property type="nucleotide sequence ID" value="NM_001043230.3"/>
</dbReference>
<dbReference type="RefSeq" id="NP_001036697.1">
    <molecule id="A0A0B4KGY6-4"/>
    <property type="nucleotide sequence ID" value="NM_001043232.1"/>
</dbReference>
<dbReference type="RefSeq" id="NP_001189199.1">
    <molecule id="A0A0B4KGY6-3"/>
    <property type="nucleotide sequence ID" value="NM_001202270.2"/>
</dbReference>
<dbReference type="RefSeq" id="NP_001189200.1">
    <molecule id="A0A0B4KGY6-6"/>
    <property type="nucleotide sequence ID" value="NM_001202271.2"/>
</dbReference>
<dbReference type="RefSeq" id="NP_001189201.1">
    <molecule id="A0A0B4KGY6-7"/>
    <property type="nucleotide sequence ID" value="NM_001202272.2"/>
</dbReference>
<dbReference type="RefSeq" id="NP_001189202.1">
    <molecule id="A0A0B4KGY6-7"/>
    <property type="nucleotide sequence ID" value="NM_001202273.2"/>
</dbReference>
<dbReference type="RefSeq" id="NP_001189203.1">
    <molecule id="A0A0B4KGY6-3"/>
    <property type="nucleotide sequence ID" value="NM_001202274.2"/>
</dbReference>
<dbReference type="RefSeq" id="NP_001262414.1">
    <molecule id="A0A0B4KGY6-10"/>
    <property type="nucleotide sequence ID" value="NM_001275485.1"/>
</dbReference>
<dbReference type="RefSeq" id="NP_001262415.1">
    <molecule id="A0A0B4KGY6-1"/>
    <property type="nucleotide sequence ID" value="NM_001275486.1"/>
</dbReference>
<dbReference type="RefSeq" id="NP_001287252.1">
    <molecule id="A0A0B4KGY6-12"/>
    <property type="nucleotide sequence ID" value="NM_001300323.1"/>
</dbReference>
<dbReference type="RefSeq" id="NP_001287253.1">
    <molecule id="A0A0B4KGY6-11"/>
    <property type="nucleotide sequence ID" value="NM_001300324.1"/>
</dbReference>
<dbReference type="RefSeq" id="NP_731351.3">
    <molecule id="A0A0B4KGY6-3"/>
    <property type="nucleotide sequence ID" value="NM_169280.4"/>
</dbReference>
<dbReference type="RefSeq" id="NP_731352.3">
    <molecule id="A0A0B4KGY6-3"/>
    <property type="nucleotide sequence ID" value="NM_169281.4"/>
</dbReference>
<dbReference type="RefSeq" id="NP_731354.1">
    <molecule id="A0A0B4KGY6-9"/>
    <property type="nucleotide sequence ID" value="NM_169283.2"/>
</dbReference>
<dbReference type="RefSeq" id="NP_731355.1">
    <molecule id="A0A0B4KGY6-2"/>
    <property type="nucleotide sequence ID" value="NM_169284.2"/>
</dbReference>
<dbReference type="RefSeq" id="NP_731356.1">
    <molecule id="A0A0B4KGY6-8"/>
    <property type="nucleotide sequence ID" value="NM_169285.3"/>
</dbReference>
<dbReference type="SMR" id="A0A0B4KGY6"/>
<dbReference type="FunCoup" id="A0A0B4KGY6">
    <property type="interactions" value="835"/>
</dbReference>
<dbReference type="IntAct" id="A0A0B4KGY6">
    <property type="interactions" value="181"/>
</dbReference>
<dbReference type="STRING" id="7227.FBpp0306419"/>
<dbReference type="GlyGen" id="A0A0B4KGY6">
    <property type="glycosylation" value="2 sites"/>
</dbReference>
<dbReference type="PaxDb" id="7227-FBpp0291831"/>
<dbReference type="DNASU" id="44258"/>
<dbReference type="EnsemblMetazoa" id="FBtr0082037">
    <molecule id="A0A0B4KGY6-9"/>
    <property type="protein sequence ID" value="FBpp0081515"/>
    <property type="gene ID" value="FBgn0261552"/>
</dbReference>
<dbReference type="EnsemblMetazoa" id="FBtr0082038">
    <molecule id="A0A0B4KGY6-2"/>
    <property type="protein sequence ID" value="FBpp0081516"/>
    <property type="gene ID" value="FBgn0261552"/>
</dbReference>
<dbReference type="EnsemblMetazoa" id="FBtr0082039">
    <molecule id="A0A0B4KGY6-8"/>
    <property type="protein sequence ID" value="FBpp0081517"/>
    <property type="gene ID" value="FBgn0261552"/>
</dbReference>
<dbReference type="EnsemblMetazoa" id="FBtr0111027">
    <molecule id="A0A0B4KGY6-3"/>
    <property type="protein sequence ID" value="FBpp0110326"/>
    <property type="gene ID" value="FBgn0261552"/>
</dbReference>
<dbReference type="EnsemblMetazoa" id="FBtr0111028">
    <molecule id="A0A0B4KGY6-3"/>
    <property type="protein sequence ID" value="FBpp0110327"/>
    <property type="gene ID" value="FBgn0261552"/>
</dbReference>
<dbReference type="EnsemblMetazoa" id="FBtr0111029">
    <molecule id="A0A0B4KGY6-3"/>
    <property type="protein sequence ID" value="FBpp0110328"/>
    <property type="gene ID" value="FBgn0261552"/>
</dbReference>
<dbReference type="EnsemblMetazoa" id="FBtr0111030">
    <molecule id="A0A0B4KGY6-5"/>
    <property type="protein sequence ID" value="FBpp0110329"/>
    <property type="gene ID" value="FBgn0261552"/>
</dbReference>
<dbReference type="EnsemblMetazoa" id="FBtr0111031">
    <molecule id="A0A0B4KGY6-4"/>
    <property type="protein sequence ID" value="FBpp0110330"/>
    <property type="gene ID" value="FBgn0261552"/>
</dbReference>
<dbReference type="EnsemblMetazoa" id="FBtr0111032">
    <molecule id="A0A0B4KGY6-7"/>
    <property type="protein sequence ID" value="FBpp0110331"/>
    <property type="gene ID" value="FBgn0261552"/>
</dbReference>
<dbReference type="EnsemblMetazoa" id="FBtr0302691">
    <molecule id="A0A0B4KGY6-6"/>
    <property type="protein sequence ID" value="FBpp0291831"/>
    <property type="gene ID" value="FBgn0261552"/>
</dbReference>
<dbReference type="EnsemblMetazoa" id="FBtr0302692">
    <molecule id="A0A0B4KGY6-3"/>
    <property type="protein sequence ID" value="FBpp0291832"/>
    <property type="gene ID" value="FBgn0261552"/>
</dbReference>
<dbReference type="EnsemblMetazoa" id="FBtr0302693">
    <molecule id="A0A0B4KGY6-3"/>
    <property type="protein sequence ID" value="FBpp0291833"/>
    <property type="gene ID" value="FBgn0261552"/>
</dbReference>
<dbReference type="EnsemblMetazoa" id="FBtr0302694">
    <molecule id="A0A0B4KGY6-7"/>
    <property type="protein sequence ID" value="FBpp0291834"/>
    <property type="gene ID" value="FBgn0261552"/>
</dbReference>
<dbReference type="EnsemblMetazoa" id="FBtr0302695">
    <molecule id="A0A0B4KGY6-7"/>
    <property type="protein sequence ID" value="FBpp0291835"/>
    <property type="gene ID" value="FBgn0261552"/>
</dbReference>
<dbReference type="EnsemblMetazoa" id="FBtr0334303">
    <molecule id="A0A0B4KGY6-10"/>
    <property type="protein sequence ID" value="FBpp0306418"/>
    <property type="gene ID" value="FBgn0261552"/>
</dbReference>
<dbReference type="EnsemblMetazoa" id="FBtr0334304">
    <molecule id="A0A0B4KGY6-1"/>
    <property type="protein sequence ID" value="FBpp0306419"/>
    <property type="gene ID" value="FBgn0261552"/>
</dbReference>
<dbReference type="EnsemblMetazoa" id="FBtr0344283">
    <molecule id="A0A0B4KGY6-12"/>
    <property type="protein sequence ID" value="FBpp0310688"/>
    <property type="gene ID" value="FBgn0261552"/>
</dbReference>
<dbReference type="EnsemblMetazoa" id="FBtr0344284">
    <molecule id="A0A0B4KGY6-11"/>
    <property type="protein sequence ID" value="FBpp0310689"/>
    <property type="gene ID" value="FBgn0261552"/>
</dbReference>
<dbReference type="GeneID" id="44258"/>
<dbReference type="KEGG" id="dme:Dmel_CG42670"/>
<dbReference type="UCSC" id="CG16765-RB">
    <property type="organism name" value="d. melanogaster"/>
</dbReference>
<dbReference type="UCSC" id="CG16765-RC">
    <property type="organism name" value="d. melanogaster"/>
</dbReference>
<dbReference type="UCSC" id="CG16765-RD">
    <property type="organism name" value="d. melanogaster"/>
</dbReference>
<dbReference type="UCSC" id="CG16765-RG">
    <property type="organism name" value="d. melanogaster"/>
</dbReference>
<dbReference type="UCSC" id="CG16765-RI">
    <property type="organism name" value="d. melanogaster"/>
</dbReference>
<dbReference type="UCSC" id="CG16765-RJ">
    <property type="organism name" value="d. melanogaster"/>
</dbReference>
<dbReference type="UCSC" id="CG16765-RK">
    <property type="organism name" value="d. melanogaster"/>
</dbReference>
<dbReference type="AGR" id="FB:FBgn0261552"/>
<dbReference type="CTD" id="109641"/>
<dbReference type="FlyBase" id="FBgn0261552">
    <property type="gene designation" value="ps"/>
</dbReference>
<dbReference type="VEuPathDB" id="VectorBase:FBgn0261552"/>
<dbReference type="eggNOG" id="KOG2191">
    <property type="taxonomic scope" value="Eukaryota"/>
</dbReference>
<dbReference type="GeneTree" id="ENSGT00940000171065"/>
<dbReference type="HOGENOM" id="CLU_022670_1_1_1"/>
<dbReference type="InParanoid" id="A0A0B4KGY6"/>
<dbReference type="OMA" id="QMRTNET"/>
<dbReference type="OrthoDB" id="441329at2759"/>
<dbReference type="BioGRID-ORCS" id="44258">
    <property type="hits" value="1 hit in 3 CRISPR screens"/>
</dbReference>
<dbReference type="ChiTaRS" id="ps">
    <property type="organism name" value="fly"/>
</dbReference>
<dbReference type="GenomeRNAi" id="44258"/>
<dbReference type="PRO" id="PR:A0A0B4KGY6"/>
<dbReference type="Proteomes" id="UP000000803">
    <property type="component" value="Chromosome 3R"/>
</dbReference>
<dbReference type="Bgee" id="FBgn0261552">
    <property type="expression patterns" value="Expressed in epithelial cell in insect leg and 318 other cell types or tissues"/>
</dbReference>
<dbReference type="ExpressionAtlas" id="A0A0B4KGY6">
    <property type="expression patterns" value="baseline and differential"/>
</dbReference>
<dbReference type="GO" id="GO:0005737">
    <property type="term" value="C:cytoplasm"/>
    <property type="evidence" value="ECO:0000318"/>
    <property type="project" value="GO_Central"/>
</dbReference>
<dbReference type="GO" id="GO:0005829">
    <property type="term" value="C:cytosol"/>
    <property type="evidence" value="ECO:0007005"/>
    <property type="project" value="FlyBase"/>
</dbReference>
<dbReference type="GO" id="GO:0005634">
    <property type="term" value="C:nucleus"/>
    <property type="evidence" value="ECO:0000314"/>
    <property type="project" value="FlyBase"/>
</dbReference>
<dbReference type="GO" id="GO:0003729">
    <property type="term" value="F:mRNA binding"/>
    <property type="evidence" value="ECO:0000318"/>
    <property type="project" value="GO_Central"/>
</dbReference>
<dbReference type="GO" id="GO:0097157">
    <property type="term" value="F:pre-mRNA intronic binding"/>
    <property type="evidence" value="ECO:0000314"/>
    <property type="project" value="FlyBase"/>
</dbReference>
<dbReference type="GO" id="GO:0000398">
    <property type="term" value="P:mRNA splicing, via spliceosome"/>
    <property type="evidence" value="ECO:0000318"/>
    <property type="project" value="GO_Central"/>
</dbReference>
<dbReference type="GO" id="GO:0033120">
    <property type="term" value="P:positive regulation of RNA splicing"/>
    <property type="evidence" value="ECO:0000314"/>
    <property type="project" value="FlyBase"/>
</dbReference>
<dbReference type="GO" id="GO:0000381">
    <property type="term" value="P:regulation of alternative mRNA splicing, via spliceosome"/>
    <property type="evidence" value="ECO:0000315"/>
    <property type="project" value="FlyBase"/>
</dbReference>
<dbReference type="CDD" id="cd22435">
    <property type="entry name" value="KH-I_NOVA_rpt1"/>
    <property type="match status" value="1"/>
</dbReference>
<dbReference type="CDD" id="cd22436">
    <property type="entry name" value="KH-I_NOVA_rpt2"/>
    <property type="match status" value="1"/>
</dbReference>
<dbReference type="CDD" id="cd09031">
    <property type="entry name" value="KH-I_NOVA_rpt3"/>
    <property type="match status" value="1"/>
</dbReference>
<dbReference type="FunFam" id="3.30.1370.10:FF:000019">
    <property type="entry name" value="RNA-binding protein Nova-1 isoform 1"/>
    <property type="match status" value="1"/>
</dbReference>
<dbReference type="FunFam" id="3.30.1370.10:FF:000022">
    <property type="entry name" value="RNA-binding protein Nova-1 isoform 1"/>
    <property type="match status" value="1"/>
</dbReference>
<dbReference type="Gene3D" id="3.30.1370.10">
    <property type="entry name" value="K Homology domain, type 1"/>
    <property type="match status" value="3"/>
</dbReference>
<dbReference type="InterPro" id="IPR047275">
    <property type="entry name" value="KH-I_NOVA_rpt1"/>
</dbReference>
<dbReference type="InterPro" id="IPR047276">
    <property type="entry name" value="KH-I_NOVA_rpt2"/>
</dbReference>
<dbReference type="InterPro" id="IPR047274">
    <property type="entry name" value="KH-I_NOVA_rpt3"/>
</dbReference>
<dbReference type="InterPro" id="IPR004087">
    <property type="entry name" value="KH_dom"/>
</dbReference>
<dbReference type="InterPro" id="IPR004088">
    <property type="entry name" value="KH_dom_type_1"/>
</dbReference>
<dbReference type="InterPro" id="IPR036612">
    <property type="entry name" value="KH_dom_type_1_sf"/>
</dbReference>
<dbReference type="PANTHER" id="PTHR10288">
    <property type="entry name" value="KH DOMAIN CONTAINING RNA BINDING PROTEIN"/>
    <property type="match status" value="1"/>
</dbReference>
<dbReference type="Pfam" id="PF00013">
    <property type="entry name" value="KH_1"/>
    <property type="match status" value="3"/>
</dbReference>
<dbReference type="SMART" id="SM00322">
    <property type="entry name" value="KH"/>
    <property type="match status" value="3"/>
</dbReference>
<dbReference type="SUPFAM" id="SSF54791">
    <property type="entry name" value="Eukaryotic type KH-domain (KH-domain type I)"/>
    <property type="match status" value="3"/>
</dbReference>
<dbReference type="PROSITE" id="PS50084">
    <property type="entry name" value="KH_TYPE_1"/>
    <property type="match status" value="3"/>
</dbReference>
<sequence>MESIMKVAMDKAAEQLIQQFGFDYLQQQLQLQHQNQHNSSPQQPQHQQLEPENEHLTYQYQQSKPTHMQQLACNYQPRHSTTTSSPSSTHSLASGGGSSSNSSNSSSSDSSSINISHISNISNISNIGNISNSNHSNAAYSLAVHSYQKQIESPANPSHVPHHQMDLSPLSENGSPNGTPGAQTPTATASGNTAAALASAAAAAAAATSGGNGSSITNCNSNNSSSSSNAQQQLQLGNYKTNSCWCYGESVCSGIEVEIENNNNNHIHHGETTYHMKILVPAVASGAIIGKGGETIASLQKDTGARVKMSKSHDFYPGTTERVCLITGSTEAIMVVMEFIMDKIREKPDLTNKIVDTDSKQTQERDKQVKILVPNSTAGMIIGKGGAFIKQIKEESGSYVQISQKPTDVSLQERCITIIGDKENNKNACKMILSKIVEDPQSGTCLNVSYADVSGPVANFNPTGSPYATNQNAINSSTASLNSTLGTTIGGANSAASLLVNGTGINLSINLGSPNPAPNLAVATQLLEHIKVAMRGSGYSETVTNEVVAALSVLAKYGVLGMGVGVSHTNGAHSTLGNFLGVTTLDQQTAAAASAATASNVFGAVGQVNLEQYAAAVASAAAASRPTQSQLDAAAVQFDPFRHLGSATAPAATPVSLNNNSFGLTATTGTATTAQLGGLSKSPTPGDLSSKDSKNVEVPEVIIGAILGPSGRSLVEIQHVSGANVQISKKGIFAPGTRNRIVTITGQPSAIAKAQYLIEQKINEEETKRARQIPLTTVVN</sequence>
<protein>
    <recommendedName>
        <fullName evidence="7">RNA-binding protein Pasilla</fullName>
    </recommendedName>
</protein>
<comment type="function">
    <text evidence="2 6">Functions to regulate alternative splicing in neurons by binding pre-mRNA in a sequence-specific manner to activate exon inclusion (By similarity). Plays a role in long-term memory formation by processing the unspliced Orb2-isoform A (Orb2A) mRNA and thereby controlling Orb2A protein abundance (PubMed:28525754).</text>
</comment>
<comment type="subcellular location">
    <subcellularLocation>
        <location evidence="5 6">Nucleus</location>
    </subcellularLocation>
    <subcellularLocation>
        <location evidence="6">Cytoplasm</location>
    </subcellularLocation>
    <text evidence="6">Localizes to synaptoneuropil region of neurons.</text>
</comment>
<comment type="alternative products">
    <event type="alternative splicing"/>
    <isoform>
        <id>A0A0B4KGY6-1</id>
        <name evidence="10">R</name>
        <sequence type="displayed"/>
    </isoform>
    <isoform>
        <id>A0A0B4KGY6-9</id>
        <name evidence="10">B</name>
        <sequence type="described" ref="VSP_061142 VSP_061146 VSP_061147"/>
    </isoform>
    <isoform>
        <id>A0A0B4KGY6-8</id>
        <name evidence="10">C</name>
        <sequence type="described" ref="VSP_061138"/>
    </isoform>
    <isoform>
        <id>A0A0B4KGY6-2</id>
        <name evidence="10">D</name>
        <sequence type="described" ref="VSP_061141"/>
    </isoform>
    <isoform>
        <id>A0A0B4KGY6-3</id>
        <name evidence="10">F</name>
        <name evidence="10">G</name>
        <name evidence="10">H</name>
        <name evidence="10">N</name>
        <name evidence="10">O</name>
        <sequence type="described" ref="VSP_061143"/>
    </isoform>
    <isoform>
        <id>A0A0B4KGY6-5</id>
        <name evidence="10">I</name>
        <sequence type="described" ref="VSP_061141 VSP_061146 VSP_061147"/>
    </isoform>
    <isoform>
        <id>A0A0B4KGY6-4</id>
        <name evidence="10">J</name>
        <sequence type="described" ref="VSP_061142"/>
    </isoform>
    <isoform>
        <id>A0A0B4KGY6-6</id>
        <name evidence="10">L</name>
        <sequence type="described" ref="VSP_061145"/>
    </isoform>
    <isoform>
        <id>A0A0B4KGY6-7</id>
        <name evidence="10">M</name>
        <name evidence="10">K</name>
        <name evidence="10">P</name>
        <sequence type="described" ref="VSP_061140"/>
    </isoform>
    <isoform>
        <id>A0A0B4KGY6-10</id>
        <name evidence="10">Q</name>
        <sequence type="described" ref="VSP_061139"/>
    </isoform>
    <isoform>
        <id>A0A0B4KGY6-12</id>
        <name evidence="10">S</name>
        <sequence type="described" ref="VSP_061144 VSP_061145"/>
    </isoform>
    <isoform>
        <id>A0A0B4KGY6-11</id>
        <name evidence="10">T</name>
        <sequence type="described" ref="VSP_061144"/>
    </isoform>
</comment>
<comment type="tissue specificity">
    <text evidence="6">Expressed in the central nervous system in mushroom body neurons (at protein level).</text>
</comment>
<comment type="developmental stage">
    <text evidence="5">Expressed in the salivary gland, anterior and posterior midgut primordia, the fully formed midgut, amnioserosa, malpighian tubules, several regions of the head, and in isolated cells along the germ band, which are likely to be hemocytes.</text>
</comment>
<comment type="domain">
    <text evidence="1">The KH domain consists of approximately 70 amino acids and includes a conserved hydrophobic core, an invariant Gly-X-X-Gly motif, and an additional variable segment. The third KH domain (KH3) binds a hairpin RNA loop containing the 5'-UCAY-3' motif on targeted molecules. RNA binding by KH3 requires residues C-terminal to the KH domain.</text>
</comment>
<comment type="disruption phenotype">
    <text evidence="5">In both embryo and larva, results in irregularly shaped salivary glands with bulges of variable sizes, leading to greater distances between neighboring nuclei and decreased apical secretion.</text>
</comment>
<organism evidence="11">
    <name type="scientific">Drosophila melanogaster</name>
    <name type="common">Fruit fly</name>
    <dbReference type="NCBI Taxonomy" id="7227"/>
    <lineage>
        <taxon>Eukaryota</taxon>
        <taxon>Metazoa</taxon>
        <taxon>Ecdysozoa</taxon>
        <taxon>Arthropoda</taxon>
        <taxon>Hexapoda</taxon>
        <taxon>Insecta</taxon>
        <taxon>Pterygota</taxon>
        <taxon>Neoptera</taxon>
        <taxon>Endopterygota</taxon>
        <taxon>Diptera</taxon>
        <taxon>Brachycera</taxon>
        <taxon>Muscomorpha</taxon>
        <taxon>Ephydroidea</taxon>
        <taxon>Drosophilidae</taxon>
        <taxon>Drosophila</taxon>
        <taxon>Sophophora</taxon>
    </lineage>
</organism>
<name>NOVA_DROME</name>
<feature type="chain" id="PRO_0000453455" description="RNA-binding protein Pasilla">
    <location>
        <begin position="1"/>
        <end position="780"/>
    </location>
</feature>
<feature type="domain" description="KH 1" evidence="3">
    <location>
        <begin position="273"/>
        <end position="340"/>
    </location>
</feature>
<feature type="domain" description="KH 2" evidence="3">
    <location>
        <begin position="366"/>
        <end position="432"/>
    </location>
</feature>
<feature type="domain" description="KH 3" evidence="3">
    <location>
        <begin position="691"/>
        <end position="758"/>
    </location>
</feature>
<feature type="region of interest" description="Disordered" evidence="4">
    <location>
        <begin position="31"/>
        <end position="50"/>
    </location>
</feature>
<feature type="region of interest" description="Disordered" evidence="4">
    <location>
        <begin position="76"/>
        <end position="113"/>
    </location>
</feature>
<feature type="region of interest" description="Disordered" evidence="4">
    <location>
        <begin position="150"/>
        <end position="190"/>
    </location>
</feature>
<feature type="region of interest" description="Disordered" evidence="4">
    <location>
        <begin position="674"/>
        <end position="693"/>
    </location>
</feature>
<feature type="region of interest" description="Required for RNA binding" evidence="1">
    <location>
        <begin position="686"/>
        <end position="776"/>
    </location>
</feature>
<feature type="compositionally biased region" description="Low complexity" evidence="4">
    <location>
        <begin position="79"/>
        <end position="91"/>
    </location>
</feature>
<feature type="compositionally biased region" description="Low complexity" evidence="4">
    <location>
        <begin position="99"/>
        <end position="113"/>
    </location>
</feature>
<feature type="compositionally biased region" description="Low complexity" evidence="4">
    <location>
        <begin position="176"/>
        <end position="190"/>
    </location>
</feature>
<feature type="splice variant" id="VSP_061138" description="In isoform C.">
    <original>MESIMKVAMDKAAEQLIQQFGFDYLQQQLQLQHQNQHNSSPQQPQHQQLEPENEHLTYQYQQSKPTHMQQLACNYQPRHSTTTSSPSSTHSLASGGGSSSNSSNSSSSDSSSINISHISNISNISNIGNISNSNHSNAAYSLAVHSYQKQIESPANPSHVPHHQMDLSPLSENGSPNGTPGAQTPTATASGNTAAALASAAAAAAAATSGGNGSSITNCNSNNSSSSSNAQQQLQLGNYKTNSCWCYGESVCSGIEVEIENNNNNHIHHG</original>
    <variation>MLFARTTSSTSISPPAMMMQQHQQQQQQQDPQKLGQQFHQQPAFQLQQSFC</variation>
    <location>
        <begin position="1"/>
        <end position="270"/>
    </location>
</feature>
<feature type="splice variant" id="VSP_061139" description="In isoform Q.">
    <original>MESIMKVAMDKAAEQLIQQFGFDYLQQQLQLQHQNQHNSSPQQPQHQQLEPENEHLTYQYQQSKPTHMQQLACNYQPRHSTTTSSPSSTHSLASGGGSSSNSSNSSSSDSSSINISHISNISNISNIGNISNSNHSNAAYSLAVHSYQKQIESPANPSHVPHHQMDLSPLSENGSPNGTPGAQTPTATASGNTAAALASAAAAAAAATSGGNGSSITNCNSNNSSSSSNAQQQLQLGNYKTNSCWCYGESVCSGIEVEIENNNNNHIHHG</original>
    <variation>MRKLCSS</variation>
    <location>
        <begin position="1"/>
        <end position="270"/>
    </location>
</feature>
<feature type="splice variant" id="VSP_061140" description="In isoform M.">
    <original>MESIMKVAMDKAAEQLIQQFGFDYLQQQLQLQHQNQHNSSPQQPQHQQLEPENEHLTYQYQQSKPTHMQQLACNYQPRHSTTTSSPSSTHSLASGGGSSSNSSNSSSSDSSSINISHISNISNISNIGNISNSNHSNAAYSLAVHSYQKQIESPANPSHVPHHQMDLSPLSENGSPNGTPGAQTPTATASGNTAAALASAAAAAAAATSGGNGSSITNCNSNNSSSSSNAQQQLQLGNYKTNSCWCYGESVCSGIEVEIENNNNNHIHH</original>
    <variation>MAEDATMETCPSPETGDSRKRPLDSDPENEQTKRSHFSS</variation>
    <location>
        <begin position="1"/>
        <end position="269"/>
    </location>
</feature>
<feature type="splice variant" id="VSP_061141" description="In isoform D and isoform I.">
    <original>MESIMKVAMDKAAEQLIQQFGFDYLQQQLQLQHQNQHNSSPQQPQHQQLEPENEHLTYQYQQSKPTHMQQLACNYQPRHSTTTSSPSSTHSLASGGGSSSNSSNSSSSDSSSINISHISNISNISNIGNISNSNHSNAAYSLAVHSYQKQIESPANPSHVPHHQMDLSPLSENGSPNGTPGAQTPTATASGNTAAALASAAAAAAAATSGGNGSSITNCNSNNSSSSSNAQQQLQLGNYKTNSCWCYG</original>
    <variation>MLFARTTSSTSISPPAMMMQQHQQQQQQQDPQKLGQQFHQQPAFQLQQSFC</variation>
    <location>
        <begin position="1"/>
        <end position="248"/>
    </location>
</feature>
<feature type="splice variant" id="VSP_061142" description="In isoform J and isoform B.">
    <original>MESIMKVAMDKAAEQLIQQFGFDYLQQQLQLQHQNQHNSSPQQPQHQQLEPENEHLTYQYQQSKPTHMQQLACNYQPRHSTTTSSPSSTHSLASGGGSSSNSSNSSSSDSSSINISHISNISNISNIGNISNSNHSNAAYSLAVHSYQKQIESPANPSHVPHHQMDLSPLSENGSPNGTPGAQTPTATASGNTAAALASAAAAAAAATSGGNGSSITNCNSNNSSSSSNAQQQLQLGNYKTNSCWCYG</original>
    <variation>MRKLCSS</variation>
    <location>
        <begin position="1"/>
        <end position="248"/>
    </location>
</feature>
<feature type="splice variant" id="VSP_061143" description="In isoform F.">
    <original>MESIMKVAMDKAAEQLIQQFGFDYLQQQLQLQHQNQHNSSPQQPQHQQLEPENEHLTYQYQQSKPTHMQQLACNYQPRHSTTTSSPSSTHSLASGGGSSSNSSNSSSSDSSSINISHISNISNISNIGNISNSNHSNAAYSLAVHSYQKQIESPANPSHVPHHQMDLSPLSENGSPNGTPGAQTPTATASGNTAAALASAAAAAAAATSGGNGSSITNCNSNNSSSSSNAQQQLQLGNYKTNSCWCY</original>
    <variation>MAEDATMETCPSPETGDSRKRPLDSDPENEQTKRSHFSS</variation>
    <location>
        <begin position="1"/>
        <end position="247"/>
    </location>
</feature>
<feature type="splice variant" id="VSP_061144" description="In isoform T and isoform S.">
    <location>
        <begin position="1"/>
        <end position="164"/>
    </location>
</feature>
<feature type="splice variant" id="VSP_061145" description="In isoform L and isoform S.">
    <location>
        <begin position="248"/>
        <end position="269"/>
    </location>
</feature>
<feature type="splice variant" id="VSP_061146" description="In isoform I and isoform B.">
    <original>PSGRSLVE</original>
    <variation>ARPYYYPY</variation>
    <location>
        <begin position="709"/>
        <end position="716"/>
    </location>
</feature>
<feature type="splice variant" id="VSP_061147" description="In isoform I and isoform B.">
    <location>
        <begin position="717"/>
        <end position="780"/>
    </location>
</feature>
<feature type="mutagenesis site" description="In both embryo and larva, results in irregularly shaped salivary glands with bulges of variable sizes, leading to greater distances between neighboring nuclei." evidence="5">
    <original>P</original>
    <variation>L</variation>
    <location>
        <position position="466"/>
    </location>
</feature>
<gene>
    <name evidence="10" type="primary">ps</name>
    <name evidence="10" type="synonym">l(3)10615</name>
    <name evidence="10" type="synonym">NOVA1</name>
    <name evidence="10" type="ORF">CG42670</name>
</gene>
<proteinExistence type="evidence at protein level"/>
<evidence type="ECO:0000250" key="1">
    <source>
        <dbReference type="UniProtKB" id="P51513"/>
    </source>
</evidence>
<evidence type="ECO:0000250" key="2">
    <source>
        <dbReference type="UniProtKB" id="Q9JKN6"/>
    </source>
</evidence>
<evidence type="ECO:0000255" key="3">
    <source>
        <dbReference type="PROSITE-ProRule" id="PRU00117"/>
    </source>
</evidence>
<evidence type="ECO:0000256" key="4">
    <source>
        <dbReference type="SAM" id="MobiDB-lite"/>
    </source>
</evidence>
<evidence type="ECO:0000269" key="5">
    <source>
    </source>
</evidence>
<evidence type="ECO:0000269" key="6">
    <source>
    </source>
</evidence>
<evidence type="ECO:0000303" key="7">
    <source>
    </source>
</evidence>
<evidence type="ECO:0000312" key="8">
    <source>
        <dbReference type="EMBL" id="AAG36789.1"/>
    </source>
</evidence>
<evidence type="ECO:0000312" key="9">
    <source>
        <dbReference type="EMBL" id="AAL89985.1"/>
    </source>
</evidence>
<evidence type="ECO:0000312" key="10">
    <source>
        <dbReference type="FlyBase" id="FBgn0261552"/>
    </source>
</evidence>
<evidence type="ECO:0000312" key="11">
    <source>
        <dbReference type="Proteomes" id="UP000000803"/>
    </source>
</evidence>
<keyword id="KW-0025">Alternative splicing</keyword>
<keyword id="KW-0963">Cytoplasm</keyword>
<keyword id="KW-0507">mRNA processing</keyword>
<keyword id="KW-0508">mRNA splicing</keyword>
<keyword id="KW-0539">Nucleus</keyword>
<keyword id="KW-1185">Reference proteome</keyword>
<keyword id="KW-0677">Repeat</keyword>
<keyword id="KW-0694">RNA-binding</keyword>
<reference evidence="8" key="1">
    <citation type="journal article" date="2001" name="Dev. Biol.">
        <title>pasilla, the Drosophila homologue of the human Nova-1 and Nova-2 proteins, is required for normal secretion in the salivary gland.</title>
        <authorList>
            <person name="Seshaiah P."/>
            <person name="Miller B."/>
            <person name="Myat M.M."/>
            <person name="Andrew D.J."/>
        </authorList>
    </citation>
    <scope>NUCLEOTIDE SEQUENCE [MRNA]</scope>
    <scope>SUBCELLULAR LOCATION</scope>
    <scope>DEVELOPMENTAL STAGE</scope>
    <scope>DISRUPTION PHENOTYPE</scope>
    <scope>MUTAGENESIS OF PRO-466</scope>
</reference>
<reference evidence="11" key="2">
    <citation type="journal article" date="2000" name="Science">
        <title>The genome sequence of Drosophila melanogaster.</title>
        <authorList>
            <person name="Adams M.D."/>
            <person name="Celniker S.E."/>
            <person name="Holt R.A."/>
            <person name="Evans C.A."/>
            <person name="Gocayne J.D."/>
            <person name="Amanatides P.G."/>
            <person name="Scherer S.E."/>
            <person name="Li P.W."/>
            <person name="Hoskins R.A."/>
            <person name="Galle R.F."/>
            <person name="George R.A."/>
            <person name="Lewis S.E."/>
            <person name="Richards S."/>
            <person name="Ashburner M."/>
            <person name="Henderson S.N."/>
            <person name="Sutton G.G."/>
            <person name="Wortman J.R."/>
            <person name="Yandell M.D."/>
            <person name="Zhang Q."/>
            <person name="Chen L.X."/>
            <person name="Brandon R.C."/>
            <person name="Rogers Y.-H.C."/>
            <person name="Blazej R.G."/>
            <person name="Champe M."/>
            <person name="Pfeiffer B.D."/>
            <person name="Wan K.H."/>
            <person name="Doyle C."/>
            <person name="Baxter E.G."/>
            <person name="Helt G."/>
            <person name="Nelson C.R."/>
            <person name="Miklos G.L.G."/>
            <person name="Abril J.F."/>
            <person name="Agbayani A."/>
            <person name="An H.-J."/>
            <person name="Andrews-Pfannkoch C."/>
            <person name="Baldwin D."/>
            <person name="Ballew R.M."/>
            <person name="Basu A."/>
            <person name="Baxendale J."/>
            <person name="Bayraktaroglu L."/>
            <person name="Beasley E.M."/>
            <person name="Beeson K.Y."/>
            <person name="Benos P.V."/>
            <person name="Berman B.P."/>
            <person name="Bhandari D."/>
            <person name="Bolshakov S."/>
            <person name="Borkova D."/>
            <person name="Botchan M.R."/>
            <person name="Bouck J."/>
            <person name="Brokstein P."/>
            <person name="Brottier P."/>
            <person name="Burtis K.C."/>
            <person name="Busam D.A."/>
            <person name="Butler H."/>
            <person name="Cadieu E."/>
            <person name="Center A."/>
            <person name="Chandra I."/>
            <person name="Cherry J.M."/>
            <person name="Cawley S."/>
            <person name="Dahlke C."/>
            <person name="Davenport L.B."/>
            <person name="Davies P."/>
            <person name="de Pablos B."/>
            <person name="Delcher A."/>
            <person name="Deng Z."/>
            <person name="Mays A.D."/>
            <person name="Dew I."/>
            <person name="Dietz S.M."/>
            <person name="Dodson K."/>
            <person name="Doup L.E."/>
            <person name="Downes M."/>
            <person name="Dugan-Rocha S."/>
            <person name="Dunkov B.C."/>
            <person name="Dunn P."/>
            <person name="Durbin K.J."/>
            <person name="Evangelista C.C."/>
            <person name="Ferraz C."/>
            <person name="Ferriera S."/>
            <person name="Fleischmann W."/>
            <person name="Fosler C."/>
            <person name="Gabrielian A.E."/>
            <person name="Garg N.S."/>
            <person name="Gelbart W.M."/>
            <person name="Glasser K."/>
            <person name="Glodek A."/>
            <person name="Gong F."/>
            <person name="Gorrell J.H."/>
            <person name="Gu Z."/>
            <person name="Guan P."/>
            <person name="Harris M."/>
            <person name="Harris N.L."/>
            <person name="Harvey D.A."/>
            <person name="Heiman T.J."/>
            <person name="Hernandez J.R."/>
            <person name="Houck J."/>
            <person name="Hostin D."/>
            <person name="Houston K.A."/>
            <person name="Howland T.J."/>
            <person name="Wei M.-H."/>
            <person name="Ibegwam C."/>
            <person name="Jalali M."/>
            <person name="Kalush F."/>
            <person name="Karpen G.H."/>
            <person name="Ke Z."/>
            <person name="Kennison J.A."/>
            <person name="Ketchum K.A."/>
            <person name="Kimmel B.E."/>
            <person name="Kodira C.D."/>
            <person name="Kraft C.L."/>
            <person name="Kravitz S."/>
            <person name="Kulp D."/>
            <person name="Lai Z."/>
            <person name="Lasko P."/>
            <person name="Lei Y."/>
            <person name="Levitsky A.A."/>
            <person name="Li J.H."/>
            <person name="Li Z."/>
            <person name="Liang Y."/>
            <person name="Lin X."/>
            <person name="Liu X."/>
            <person name="Mattei B."/>
            <person name="McIntosh T.C."/>
            <person name="McLeod M.P."/>
            <person name="McPherson D."/>
            <person name="Merkulov G."/>
            <person name="Milshina N.V."/>
            <person name="Mobarry C."/>
            <person name="Morris J."/>
            <person name="Moshrefi A."/>
            <person name="Mount S.M."/>
            <person name="Moy M."/>
            <person name="Murphy B."/>
            <person name="Murphy L."/>
            <person name="Muzny D.M."/>
            <person name="Nelson D.L."/>
            <person name="Nelson D.R."/>
            <person name="Nelson K.A."/>
            <person name="Nixon K."/>
            <person name="Nusskern D.R."/>
            <person name="Pacleb J.M."/>
            <person name="Palazzolo M."/>
            <person name="Pittman G.S."/>
            <person name="Pan S."/>
            <person name="Pollard J."/>
            <person name="Puri V."/>
            <person name="Reese M.G."/>
            <person name="Reinert K."/>
            <person name="Remington K."/>
            <person name="Saunders R.D.C."/>
            <person name="Scheeler F."/>
            <person name="Shen H."/>
            <person name="Shue B.C."/>
            <person name="Siden-Kiamos I."/>
            <person name="Simpson M."/>
            <person name="Skupski M.P."/>
            <person name="Smith T.J."/>
            <person name="Spier E."/>
            <person name="Spradling A.C."/>
            <person name="Stapleton M."/>
            <person name="Strong R."/>
            <person name="Sun E."/>
            <person name="Svirskas R."/>
            <person name="Tector C."/>
            <person name="Turner R."/>
            <person name="Venter E."/>
            <person name="Wang A.H."/>
            <person name="Wang X."/>
            <person name="Wang Z.-Y."/>
            <person name="Wassarman D.A."/>
            <person name="Weinstock G.M."/>
            <person name="Weissenbach J."/>
            <person name="Williams S.M."/>
            <person name="Woodage T."/>
            <person name="Worley K.C."/>
            <person name="Wu D."/>
            <person name="Yang S."/>
            <person name="Yao Q.A."/>
            <person name="Ye J."/>
            <person name="Yeh R.-F."/>
            <person name="Zaveri J.S."/>
            <person name="Zhan M."/>
            <person name="Zhang G."/>
            <person name="Zhao Q."/>
            <person name="Zheng L."/>
            <person name="Zheng X.H."/>
            <person name="Zhong F.N."/>
            <person name="Zhong W."/>
            <person name="Zhou X."/>
            <person name="Zhu S.C."/>
            <person name="Zhu X."/>
            <person name="Smith H.O."/>
            <person name="Gibbs R.A."/>
            <person name="Myers E.W."/>
            <person name="Rubin G.M."/>
            <person name="Venter J.C."/>
        </authorList>
    </citation>
    <scope>NUCLEOTIDE SEQUENCE [LARGE SCALE GENOMIC DNA]</scope>
    <source>
        <strain evidence="11">Berkeley</strain>
    </source>
</reference>
<reference evidence="11" key="3">
    <citation type="journal article" date="2002" name="Genome Biol.">
        <title>Annotation of the Drosophila melanogaster euchromatic genome: a systematic review.</title>
        <authorList>
            <person name="Misra S."/>
            <person name="Crosby M.A."/>
            <person name="Mungall C.J."/>
            <person name="Matthews B.B."/>
            <person name="Campbell K.S."/>
            <person name="Hradecky P."/>
            <person name="Huang Y."/>
            <person name="Kaminker J.S."/>
            <person name="Millburn G.H."/>
            <person name="Prochnik S.E."/>
            <person name="Smith C.D."/>
            <person name="Tupy J.L."/>
            <person name="Whitfield E.J."/>
            <person name="Bayraktaroglu L."/>
            <person name="Berman B.P."/>
            <person name="Bettencourt B.R."/>
            <person name="Celniker S.E."/>
            <person name="de Grey A.D.N.J."/>
            <person name="Drysdale R.A."/>
            <person name="Harris N.L."/>
            <person name="Richter J."/>
            <person name="Russo S."/>
            <person name="Schroeder A.J."/>
            <person name="Shu S.Q."/>
            <person name="Stapleton M."/>
            <person name="Yamada C."/>
            <person name="Ashburner M."/>
            <person name="Gelbart W.M."/>
            <person name="Rubin G.M."/>
            <person name="Lewis S.E."/>
        </authorList>
    </citation>
    <scope>GENOME REANNOTATION</scope>
    <source>
        <strain evidence="11">Berkeley</strain>
    </source>
</reference>
<reference evidence="9" key="4">
    <citation type="journal article" date="2002" name="Genome Biol.">
        <title>A Drosophila full-length cDNA resource.</title>
        <authorList>
            <person name="Stapleton M."/>
            <person name="Carlson J.W."/>
            <person name="Brokstein P."/>
            <person name="Yu C."/>
            <person name="Champe M."/>
            <person name="George R.A."/>
            <person name="Guarin H."/>
            <person name="Kronmiller B."/>
            <person name="Pacleb J.M."/>
            <person name="Park S."/>
            <person name="Wan K.H."/>
            <person name="Rubin G.M."/>
            <person name="Celniker S.E."/>
        </authorList>
    </citation>
    <scope>NUCLEOTIDE SEQUENCE [LARGE SCALE MRNA] (ISOFORM J)</scope>
    <source>
        <strain evidence="9">Berkeley</strain>
        <tissue evidence="9">Testis</tissue>
    </source>
</reference>
<reference key="5">
    <citation type="journal article" date="2017" name="Cell">
        <title>Regulated Intron Removal Integrates Motivational State and Experience.</title>
        <authorList>
            <person name="Gill J."/>
            <person name="Park Y."/>
            <person name="McGinnis J.P."/>
            <person name="Perez-Sanchez C."/>
            <person name="Blanchette M."/>
            <person name="Si K."/>
        </authorList>
    </citation>
    <scope>FUNCTION</scope>
    <scope>SUBCELLULAR LOCATION</scope>
    <scope>TISSUE SPECIFICITY</scope>
</reference>
<accession>A0A0B4KGY6</accession>
<accession>A0A0B4JCX5</accession>
<accession>A0A0B4KFY5</accession>
<accession>A0A0B4LGY5</accession>
<accession>A0A0B4LI06</accession>
<accession>Q0KI94</accession>
<accession>Q0KI96</accession>
<accession>Q8INP0</accession>
<accession>Q8T4D1</accession>
<accession>Q9GNC8</accession>
<accession>Q9GQN3</accession>
<accession>Q9GQN4</accession>
<accession>Q9VHD4</accession>
<accession>Q9VHD6</accession>